<evidence type="ECO:0000305" key="1"/>
<keyword id="KW-1185">Reference proteome</keyword>
<keyword id="KW-0677">Repeat</keyword>
<accession>Q94481</accession>
<accession>Q54GL0</accession>
<proteinExistence type="evidence at transcript level"/>
<protein>
    <recommendedName>
        <fullName>FNIP repeat-containing protein cigB</fullName>
    </recommendedName>
</protein>
<comment type="sequence caution" evidence="1">
    <conflict type="erroneous gene model prediction">
        <sequence resource="EMBL-CDS" id="EAL62394"/>
    </conflict>
</comment>
<organism>
    <name type="scientific">Dictyostelium discoideum</name>
    <name type="common">Social amoeba</name>
    <dbReference type="NCBI Taxonomy" id="44689"/>
    <lineage>
        <taxon>Eukaryota</taxon>
        <taxon>Amoebozoa</taxon>
        <taxon>Evosea</taxon>
        <taxon>Eumycetozoa</taxon>
        <taxon>Dictyostelia</taxon>
        <taxon>Dictyosteliales</taxon>
        <taxon>Dictyosteliaceae</taxon>
        <taxon>Dictyostelium</taxon>
    </lineage>
</organism>
<dbReference type="EMBL" id="AAFI02000152">
    <property type="protein sequence ID" value="EAL62394.1"/>
    <property type="status" value="ALT_SEQ"/>
    <property type="molecule type" value="Genomic_DNA"/>
</dbReference>
<dbReference type="EMBL" id="U66528">
    <property type="protein sequence ID" value="AAB06791.1"/>
    <property type="molecule type" value="mRNA"/>
</dbReference>
<dbReference type="RefSeq" id="XP_635907.1">
    <property type="nucleotide sequence ID" value="XM_630815.1"/>
</dbReference>
<dbReference type="SMR" id="Q94481"/>
<dbReference type="FunCoup" id="Q94481">
    <property type="interactions" value="82"/>
</dbReference>
<dbReference type="PaxDb" id="44689-DDB0191307"/>
<dbReference type="EnsemblProtists" id="EAL62394">
    <property type="protein sequence ID" value="EAL62394"/>
    <property type="gene ID" value="DDB_G0290067"/>
</dbReference>
<dbReference type="GeneID" id="8627473"/>
<dbReference type="KEGG" id="ddi:DDB_G0290067"/>
<dbReference type="dictyBase" id="DDB_G0290067">
    <property type="gene designation" value="cigB"/>
</dbReference>
<dbReference type="VEuPathDB" id="AmoebaDB:DDB_G0290067"/>
<dbReference type="eggNOG" id="ENOG502SBJG">
    <property type="taxonomic scope" value="Eukaryota"/>
</dbReference>
<dbReference type="InParanoid" id="Q94481"/>
<dbReference type="PRO" id="PR:Q94481"/>
<dbReference type="Proteomes" id="UP000002195">
    <property type="component" value="Chromosome 5"/>
</dbReference>
<dbReference type="GO" id="GO:0008270">
    <property type="term" value="F:zinc ion binding"/>
    <property type="evidence" value="ECO:0007669"/>
    <property type="project" value="InterPro"/>
</dbReference>
<dbReference type="CDD" id="cd19774">
    <property type="entry name" value="Bbox2_TRIM23_C-IX_rpt2"/>
    <property type="match status" value="1"/>
</dbReference>
<dbReference type="Gene3D" id="3.30.160.60">
    <property type="entry name" value="Classic Zinc Finger"/>
    <property type="match status" value="1"/>
</dbReference>
<dbReference type="InterPro" id="IPR008615">
    <property type="entry name" value="FNIP"/>
</dbReference>
<dbReference type="InterPro" id="IPR052697">
    <property type="entry name" value="FNIP_repeat"/>
</dbReference>
<dbReference type="InterPro" id="IPR000315">
    <property type="entry name" value="Znf_B-box"/>
</dbReference>
<dbReference type="PANTHER" id="PTHR32031:SF47">
    <property type="entry name" value="B BOX-TYPE DOMAIN-CONTAINING PROTEIN-RELATED"/>
    <property type="match status" value="1"/>
</dbReference>
<dbReference type="PANTHER" id="PTHR32031">
    <property type="entry name" value="FNIP REPEAT-CONTAINING PROTEIN-RELATED-RELATED"/>
    <property type="match status" value="1"/>
</dbReference>
<dbReference type="Pfam" id="PF05725">
    <property type="entry name" value="FNIP"/>
    <property type="match status" value="9"/>
</dbReference>
<dbReference type="Pfam" id="PF00643">
    <property type="entry name" value="zf-B_box"/>
    <property type="match status" value="1"/>
</dbReference>
<dbReference type="SUPFAM" id="SSF57845">
    <property type="entry name" value="B-box zinc-binding domain"/>
    <property type="match status" value="1"/>
</dbReference>
<sequence length="744" mass="84503">MKESEDIIINNQNRCTLHPNKNLEFLCLDCKFMPCCSLCTSRKGEHHGHKTDSLESSASNIHSLINDFKDNIYPKLIERKENDQILLKESNETFKEIQSQNDDNNNLLKNEFKQIHNILSFVELDIEKQLSTNLDQNILINTIITSSINNDNKIISTILNNNNNSIIDKLNYFTQINNQQDNDDNDDCYQIDTDTIELIKQYQNSLLILKNSNNINNLTKLKEYNNQILKFDNQTINNIKNSFKSIYSFGDIPNDAIDYNINNNNNNNNNNNNNNNNELNNSNNKNEFIKILNHNFYIYSESDESSFLTDDFESLAFKDNCNILSKLKKLPNNVLLLSGFNQKLTKGIIPEGVKVLYIGDIKQELIIDSIPNTVTTVGLWYGFNQKLTKGIIPEGVKELRLGDIKQELIIDSIPSTLTTVILCDGFNQKLTKGIIPEGVKVLYIGDIKQELIIDSIPNTVTRVRLLDGFNQKLTKGIIPESVKELHIGNIKQELIIDSIPNTVTTITLCDGFNQKLTKGIIPEGVKELYIGNLKQELIIDSIPNTVTTVRLCDGFNQKLTKGIIPEGVKELYIRDIKQELIIDSIPNTVTTVILCDGFNQKLTKGIIPEWVKGLCLGDIKQELIIDSIPNTVTTVRLLDGFNQKLTKGIIPESVKELYIDDIKQELIIDSIPNTVTTVRLLDGFNQKLTKGIIPEWVKELHIGDIKQELIIDSIPNTLNNVYIYKSCKKLIYSFVPVNVKIVNI</sequence>
<reference key="1">
    <citation type="journal article" date="2005" name="Nature">
        <title>The genome of the social amoeba Dictyostelium discoideum.</title>
        <authorList>
            <person name="Eichinger L."/>
            <person name="Pachebat J.A."/>
            <person name="Gloeckner G."/>
            <person name="Rajandream M.A."/>
            <person name="Sucgang R."/>
            <person name="Berriman M."/>
            <person name="Song J."/>
            <person name="Olsen R."/>
            <person name="Szafranski K."/>
            <person name="Xu Q."/>
            <person name="Tunggal B."/>
            <person name="Kummerfeld S."/>
            <person name="Madera M."/>
            <person name="Konfortov B.A."/>
            <person name="Rivero F."/>
            <person name="Bankier A.T."/>
            <person name="Lehmann R."/>
            <person name="Hamlin N."/>
            <person name="Davies R."/>
            <person name="Gaudet P."/>
            <person name="Fey P."/>
            <person name="Pilcher K."/>
            <person name="Chen G."/>
            <person name="Saunders D."/>
            <person name="Sodergren E.J."/>
            <person name="Davis P."/>
            <person name="Kerhornou A."/>
            <person name="Nie X."/>
            <person name="Hall N."/>
            <person name="Anjard C."/>
            <person name="Hemphill L."/>
            <person name="Bason N."/>
            <person name="Farbrother P."/>
            <person name="Desany B."/>
            <person name="Just E."/>
            <person name="Morio T."/>
            <person name="Rost R."/>
            <person name="Churcher C.M."/>
            <person name="Cooper J."/>
            <person name="Haydock S."/>
            <person name="van Driessche N."/>
            <person name="Cronin A."/>
            <person name="Goodhead I."/>
            <person name="Muzny D.M."/>
            <person name="Mourier T."/>
            <person name="Pain A."/>
            <person name="Lu M."/>
            <person name="Harper D."/>
            <person name="Lindsay R."/>
            <person name="Hauser H."/>
            <person name="James K.D."/>
            <person name="Quiles M."/>
            <person name="Madan Babu M."/>
            <person name="Saito T."/>
            <person name="Buchrieser C."/>
            <person name="Wardroper A."/>
            <person name="Felder M."/>
            <person name="Thangavelu M."/>
            <person name="Johnson D."/>
            <person name="Knights A."/>
            <person name="Loulseged H."/>
            <person name="Mungall K.L."/>
            <person name="Oliver K."/>
            <person name="Price C."/>
            <person name="Quail M.A."/>
            <person name="Urushihara H."/>
            <person name="Hernandez J."/>
            <person name="Rabbinowitsch E."/>
            <person name="Steffen D."/>
            <person name="Sanders M."/>
            <person name="Ma J."/>
            <person name="Kohara Y."/>
            <person name="Sharp S."/>
            <person name="Simmonds M.N."/>
            <person name="Spiegler S."/>
            <person name="Tivey A."/>
            <person name="Sugano S."/>
            <person name="White B."/>
            <person name="Walker D."/>
            <person name="Woodward J.R."/>
            <person name="Winckler T."/>
            <person name="Tanaka Y."/>
            <person name="Shaulsky G."/>
            <person name="Schleicher M."/>
            <person name="Weinstock G.M."/>
            <person name="Rosenthal A."/>
            <person name="Cox E.C."/>
            <person name="Chisholm R.L."/>
            <person name="Gibbs R.A."/>
            <person name="Loomis W.F."/>
            <person name="Platzer M."/>
            <person name="Kay R.R."/>
            <person name="Williams J.G."/>
            <person name="Dear P.H."/>
            <person name="Noegel A.A."/>
            <person name="Barrell B.G."/>
            <person name="Kuspa A."/>
        </authorList>
    </citation>
    <scope>NUCLEOTIDE SEQUENCE [LARGE SCALE GENOMIC DNA]</scope>
    <source>
        <strain>AX4</strain>
    </source>
</reference>
<reference key="2">
    <citation type="journal article" date="1996" name="Proc. Natl. Acad. Sci. U.S.A.">
        <title>Ordered yeast artificial chromosome clones representing the Dictyostelium discoideum genome.</title>
        <authorList>
            <person name="Kuspa A."/>
            <person name="Loomis W.F."/>
        </authorList>
    </citation>
    <scope>NUCLEOTIDE SEQUENCE [LARGE SCALE MRNA] OF 10-744</scope>
    <source>
        <strain>AX4</strain>
    </source>
</reference>
<gene>
    <name type="primary">cigB</name>
    <name type="ORF">DDB_G0290067</name>
</gene>
<feature type="chain" id="PRO_0000089749" description="FNIP repeat-containing protein cigB">
    <location>
        <begin position="1"/>
        <end position="744"/>
    </location>
</feature>
<feature type="repeat" description="FNIP 1">
    <location>
        <begin position="340"/>
        <end position="376"/>
    </location>
</feature>
<feature type="repeat" description="FNIP 2">
    <location>
        <begin position="383"/>
        <end position="422"/>
    </location>
</feature>
<feature type="repeat" description="FNIP 3">
    <location>
        <begin position="426"/>
        <end position="462"/>
    </location>
</feature>
<feature type="repeat" description="FNIP 4">
    <location>
        <begin position="469"/>
        <end position="508"/>
    </location>
</feature>
<feature type="repeat" description="FNIP 5">
    <location>
        <begin position="512"/>
        <end position="550"/>
    </location>
</feature>
<feature type="repeat" description="FNIP 6">
    <location>
        <begin position="555"/>
        <end position="594"/>
    </location>
</feature>
<feature type="repeat" description="FNIP 7">
    <location>
        <begin position="598"/>
        <end position="635"/>
    </location>
</feature>
<feature type="repeat" description="FNIP 8">
    <location>
        <begin position="641"/>
        <end position="678"/>
    </location>
</feature>
<feature type="repeat" description="FNIP 9">
    <location>
        <begin position="684"/>
        <end position="723"/>
    </location>
</feature>
<name>CIGB_DICDI</name>